<accession>Q5WLS3</accession>
<comment type="function">
    <text evidence="1">Forms part of the ribosomal stalk, playing a central role in the interaction of the ribosome with GTP-bound translation factors.</text>
</comment>
<comment type="subunit">
    <text evidence="1">Part of the ribosomal stalk of the 50S ribosomal subunit. The N-terminus interacts with L11 and the large rRNA to form the base of the stalk. The C-terminus forms an elongated spine to which L12 dimers bind in a sequential fashion forming a multimeric L10(L12)X complex.</text>
</comment>
<comment type="similarity">
    <text evidence="1">Belongs to the universal ribosomal protein uL10 family.</text>
</comment>
<evidence type="ECO:0000255" key="1">
    <source>
        <dbReference type="HAMAP-Rule" id="MF_00362"/>
    </source>
</evidence>
<evidence type="ECO:0000305" key="2"/>
<organism>
    <name type="scientific">Shouchella clausii (strain KSM-K16)</name>
    <name type="common">Alkalihalobacillus clausii</name>
    <dbReference type="NCBI Taxonomy" id="66692"/>
    <lineage>
        <taxon>Bacteria</taxon>
        <taxon>Bacillati</taxon>
        <taxon>Bacillota</taxon>
        <taxon>Bacilli</taxon>
        <taxon>Bacillales</taxon>
        <taxon>Bacillaceae</taxon>
        <taxon>Shouchella</taxon>
    </lineage>
</organism>
<keyword id="KW-1185">Reference proteome</keyword>
<keyword id="KW-0687">Ribonucleoprotein</keyword>
<keyword id="KW-0689">Ribosomal protein</keyword>
<keyword id="KW-0694">RNA-binding</keyword>
<keyword id="KW-0699">rRNA-binding</keyword>
<sequence>MSKVLEQKQQVVAEVAAKLRDSKSTVIVDYRGLNVAQVTELRKQLREAGVEYKVYKNTLVRRATAEAGLTGLDEHLVGPTAIAFGVDDVIAPAKVLNEFAKNNEALTIKTGVIEGNISTADEVKALAELPSREGLLSMLANVLQAPVRQFALAAKAVAEQKEEQGA</sequence>
<reference key="1">
    <citation type="submission" date="2003-10" db="EMBL/GenBank/DDBJ databases">
        <title>The complete genome sequence of the alkaliphilic Bacillus clausii KSM-K16.</title>
        <authorList>
            <person name="Takaki Y."/>
            <person name="Kageyama Y."/>
            <person name="Shimamura S."/>
            <person name="Suzuki H."/>
            <person name="Nishi S."/>
            <person name="Hatada Y."/>
            <person name="Kawai S."/>
            <person name="Ito S."/>
            <person name="Horikoshi K."/>
        </authorList>
    </citation>
    <scope>NUCLEOTIDE SEQUENCE [LARGE SCALE GENOMIC DNA]</scope>
    <source>
        <strain>KSM-K16</strain>
    </source>
</reference>
<name>RL10_SHOC1</name>
<protein>
    <recommendedName>
        <fullName evidence="1">Large ribosomal subunit protein uL10</fullName>
    </recommendedName>
    <alternativeName>
        <fullName evidence="2">50S ribosomal protein L10</fullName>
    </alternativeName>
</protein>
<dbReference type="EMBL" id="AP006627">
    <property type="protein sequence ID" value="BAD62682.1"/>
    <property type="molecule type" value="Genomic_DNA"/>
</dbReference>
<dbReference type="RefSeq" id="WP_011245003.1">
    <property type="nucleotide sequence ID" value="NC_006582.1"/>
</dbReference>
<dbReference type="SMR" id="Q5WLS3"/>
<dbReference type="STRING" id="66692.ABC0139"/>
<dbReference type="GeneID" id="86924175"/>
<dbReference type="KEGG" id="bcl:ABC0139"/>
<dbReference type="eggNOG" id="COG0244">
    <property type="taxonomic scope" value="Bacteria"/>
</dbReference>
<dbReference type="HOGENOM" id="CLU_092227_2_0_9"/>
<dbReference type="OrthoDB" id="9808307at2"/>
<dbReference type="Proteomes" id="UP000001168">
    <property type="component" value="Chromosome"/>
</dbReference>
<dbReference type="GO" id="GO:0015934">
    <property type="term" value="C:large ribosomal subunit"/>
    <property type="evidence" value="ECO:0007669"/>
    <property type="project" value="InterPro"/>
</dbReference>
<dbReference type="GO" id="GO:0070180">
    <property type="term" value="F:large ribosomal subunit rRNA binding"/>
    <property type="evidence" value="ECO:0007669"/>
    <property type="project" value="UniProtKB-UniRule"/>
</dbReference>
<dbReference type="GO" id="GO:0003735">
    <property type="term" value="F:structural constituent of ribosome"/>
    <property type="evidence" value="ECO:0007669"/>
    <property type="project" value="InterPro"/>
</dbReference>
<dbReference type="GO" id="GO:0006412">
    <property type="term" value="P:translation"/>
    <property type="evidence" value="ECO:0007669"/>
    <property type="project" value="UniProtKB-UniRule"/>
</dbReference>
<dbReference type="CDD" id="cd05797">
    <property type="entry name" value="Ribosomal_L10"/>
    <property type="match status" value="1"/>
</dbReference>
<dbReference type="FunFam" id="3.30.70.1730:FF:000001">
    <property type="entry name" value="50S ribosomal protein L10"/>
    <property type="match status" value="1"/>
</dbReference>
<dbReference type="Gene3D" id="3.30.70.1730">
    <property type="match status" value="1"/>
</dbReference>
<dbReference type="HAMAP" id="MF_00362">
    <property type="entry name" value="Ribosomal_uL10"/>
    <property type="match status" value="1"/>
</dbReference>
<dbReference type="InterPro" id="IPR001790">
    <property type="entry name" value="Ribosomal_uL10"/>
</dbReference>
<dbReference type="InterPro" id="IPR043141">
    <property type="entry name" value="Ribosomal_uL10-like_sf"/>
</dbReference>
<dbReference type="InterPro" id="IPR022973">
    <property type="entry name" value="Ribosomal_uL10_bac"/>
</dbReference>
<dbReference type="InterPro" id="IPR047865">
    <property type="entry name" value="Ribosomal_uL10_bac_type"/>
</dbReference>
<dbReference type="InterPro" id="IPR002363">
    <property type="entry name" value="Ribosomal_uL10_CS_bac"/>
</dbReference>
<dbReference type="NCBIfam" id="NF000955">
    <property type="entry name" value="PRK00099.1-1"/>
    <property type="match status" value="1"/>
</dbReference>
<dbReference type="PANTHER" id="PTHR11560">
    <property type="entry name" value="39S RIBOSOMAL PROTEIN L10, MITOCHONDRIAL"/>
    <property type="match status" value="1"/>
</dbReference>
<dbReference type="Pfam" id="PF00466">
    <property type="entry name" value="Ribosomal_L10"/>
    <property type="match status" value="1"/>
</dbReference>
<dbReference type="SUPFAM" id="SSF160369">
    <property type="entry name" value="Ribosomal protein L10-like"/>
    <property type="match status" value="1"/>
</dbReference>
<dbReference type="PROSITE" id="PS01109">
    <property type="entry name" value="RIBOSOMAL_L10"/>
    <property type="match status" value="1"/>
</dbReference>
<feature type="chain" id="PRO_0000154587" description="Large ribosomal subunit protein uL10">
    <location>
        <begin position="1"/>
        <end position="166"/>
    </location>
</feature>
<proteinExistence type="inferred from homology"/>
<gene>
    <name evidence="1" type="primary">rplJ</name>
    <name type="ordered locus">ABC0139</name>
</gene>